<proteinExistence type="inferred from homology"/>
<evidence type="ECO:0000255" key="1">
    <source>
        <dbReference type="HAMAP-Rule" id="MF_00178"/>
    </source>
</evidence>
<keyword id="KW-1185">Reference proteome</keyword>
<keyword id="KW-0686">Riboflavin biosynthesis</keyword>
<keyword id="KW-0808">Transferase</keyword>
<dbReference type="EC" id="2.5.1.78" evidence="1"/>
<dbReference type="EMBL" id="CP000542">
    <property type="protein sequence ID" value="ABM60484.1"/>
    <property type="molecule type" value="Genomic_DNA"/>
</dbReference>
<dbReference type="RefSeq" id="WP_011812462.1">
    <property type="nucleotide sequence ID" value="NC_008786.1"/>
</dbReference>
<dbReference type="SMR" id="A1WS77"/>
<dbReference type="STRING" id="391735.Veis_4792"/>
<dbReference type="GeneID" id="76463058"/>
<dbReference type="KEGG" id="vei:Veis_4792"/>
<dbReference type="eggNOG" id="COG0054">
    <property type="taxonomic scope" value="Bacteria"/>
</dbReference>
<dbReference type="HOGENOM" id="CLU_089358_1_2_4"/>
<dbReference type="OrthoDB" id="9809709at2"/>
<dbReference type="UniPathway" id="UPA00275">
    <property type="reaction ID" value="UER00404"/>
</dbReference>
<dbReference type="Proteomes" id="UP000000374">
    <property type="component" value="Chromosome"/>
</dbReference>
<dbReference type="GO" id="GO:0005829">
    <property type="term" value="C:cytosol"/>
    <property type="evidence" value="ECO:0007669"/>
    <property type="project" value="TreeGrafter"/>
</dbReference>
<dbReference type="GO" id="GO:0009349">
    <property type="term" value="C:riboflavin synthase complex"/>
    <property type="evidence" value="ECO:0007669"/>
    <property type="project" value="InterPro"/>
</dbReference>
<dbReference type="GO" id="GO:0000906">
    <property type="term" value="F:6,7-dimethyl-8-ribityllumazine synthase activity"/>
    <property type="evidence" value="ECO:0007669"/>
    <property type="project" value="UniProtKB-UniRule"/>
</dbReference>
<dbReference type="GO" id="GO:0009231">
    <property type="term" value="P:riboflavin biosynthetic process"/>
    <property type="evidence" value="ECO:0007669"/>
    <property type="project" value="UniProtKB-UniRule"/>
</dbReference>
<dbReference type="CDD" id="cd09209">
    <property type="entry name" value="Lumazine_synthase-I"/>
    <property type="match status" value="1"/>
</dbReference>
<dbReference type="Gene3D" id="3.40.50.960">
    <property type="entry name" value="Lumazine/riboflavin synthase"/>
    <property type="match status" value="1"/>
</dbReference>
<dbReference type="HAMAP" id="MF_00178">
    <property type="entry name" value="Lumazine_synth"/>
    <property type="match status" value="1"/>
</dbReference>
<dbReference type="InterPro" id="IPR034964">
    <property type="entry name" value="LS"/>
</dbReference>
<dbReference type="InterPro" id="IPR002180">
    <property type="entry name" value="LS/RS"/>
</dbReference>
<dbReference type="InterPro" id="IPR036467">
    <property type="entry name" value="LS/RS_sf"/>
</dbReference>
<dbReference type="NCBIfam" id="TIGR00114">
    <property type="entry name" value="lumazine-synth"/>
    <property type="match status" value="1"/>
</dbReference>
<dbReference type="PANTHER" id="PTHR21058:SF0">
    <property type="entry name" value="6,7-DIMETHYL-8-RIBITYLLUMAZINE SYNTHASE"/>
    <property type="match status" value="1"/>
</dbReference>
<dbReference type="PANTHER" id="PTHR21058">
    <property type="entry name" value="6,7-DIMETHYL-8-RIBITYLLUMAZINE SYNTHASE DMRL SYNTHASE LUMAZINE SYNTHASE"/>
    <property type="match status" value="1"/>
</dbReference>
<dbReference type="Pfam" id="PF00885">
    <property type="entry name" value="DMRL_synthase"/>
    <property type="match status" value="1"/>
</dbReference>
<dbReference type="SUPFAM" id="SSF52121">
    <property type="entry name" value="Lumazine synthase"/>
    <property type="match status" value="1"/>
</dbReference>
<name>RISB_VEREI</name>
<gene>
    <name evidence="1" type="primary">ribH</name>
    <name type="ordered locus">Veis_4792</name>
</gene>
<comment type="function">
    <text evidence="1">Catalyzes the formation of 6,7-dimethyl-8-ribityllumazine by condensation of 5-amino-6-(D-ribitylamino)uracil with 3,4-dihydroxy-2-butanone 4-phosphate. This is the penultimate step in the biosynthesis of riboflavin.</text>
</comment>
<comment type="catalytic activity">
    <reaction evidence="1">
        <text>(2S)-2-hydroxy-3-oxobutyl phosphate + 5-amino-6-(D-ribitylamino)uracil = 6,7-dimethyl-8-(1-D-ribityl)lumazine + phosphate + 2 H2O + H(+)</text>
        <dbReference type="Rhea" id="RHEA:26152"/>
        <dbReference type="ChEBI" id="CHEBI:15377"/>
        <dbReference type="ChEBI" id="CHEBI:15378"/>
        <dbReference type="ChEBI" id="CHEBI:15934"/>
        <dbReference type="ChEBI" id="CHEBI:43474"/>
        <dbReference type="ChEBI" id="CHEBI:58201"/>
        <dbReference type="ChEBI" id="CHEBI:58830"/>
        <dbReference type="EC" id="2.5.1.78"/>
    </reaction>
</comment>
<comment type="pathway">
    <text evidence="1">Cofactor biosynthesis; riboflavin biosynthesis; riboflavin from 2-hydroxy-3-oxobutyl phosphate and 5-amino-6-(D-ribitylamino)uracil: step 1/2.</text>
</comment>
<comment type="similarity">
    <text evidence="1">Belongs to the DMRL synthase family.</text>
</comment>
<accession>A1WS77</accession>
<organism>
    <name type="scientific">Verminephrobacter eiseniae (strain EF01-2)</name>
    <dbReference type="NCBI Taxonomy" id="391735"/>
    <lineage>
        <taxon>Bacteria</taxon>
        <taxon>Pseudomonadati</taxon>
        <taxon>Pseudomonadota</taxon>
        <taxon>Betaproteobacteria</taxon>
        <taxon>Burkholderiales</taxon>
        <taxon>Comamonadaceae</taxon>
        <taxon>Verminephrobacter</taxon>
    </lineage>
</organism>
<feature type="chain" id="PRO_1000040544" description="6,7-dimethyl-8-ribityllumazine synthase">
    <location>
        <begin position="1"/>
        <end position="154"/>
    </location>
</feature>
<feature type="active site" description="Proton donor" evidence="1">
    <location>
        <position position="92"/>
    </location>
</feature>
<feature type="binding site" evidence="1">
    <location>
        <position position="26"/>
    </location>
    <ligand>
        <name>5-amino-6-(D-ribitylamino)uracil</name>
        <dbReference type="ChEBI" id="CHEBI:15934"/>
    </ligand>
</feature>
<feature type="binding site" evidence="1">
    <location>
        <begin position="60"/>
        <end position="62"/>
    </location>
    <ligand>
        <name>5-amino-6-(D-ribitylamino)uracil</name>
        <dbReference type="ChEBI" id="CHEBI:15934"/>
    </ligand>
</feature>
<feature type="binding site" evidence="1">
    <location>
        <begin position="84"/>
        <end position="86"/>
    </location>
    <ligand>
        <name>5-amino-6-(D-ribitylamino)uracil</name>
        <dbReference type="ChEBI" id="CHEBI:15934"/>
    </ligand>
</feature>
<feature type="binding site" evidence="1">
    <location>
        <begin position="89"/>
        <end position="90"/>
    </location>
    <ligand>
        <name>(2S)-2-hydroxy-3-oxobutyl phosphate</name>
        <dbReference type="ChEBI" id="CHEBI:58830"/>
    </ligand>
</feature>
<feature type="binding site" evidence="1">
    <location>
        <position position="117"/>
    </location>
    <ligand>
        <name>5-amino-6-(D-ribitylamino)uracil</name>
        <dbReference type="ChEBI" id="CHEBI:15934"/>
    </ligand>
</feature>
<feature type="binding site" evidence="1">
    <location>
        <position position="131"/>
    </location>
    <ligand>
        <name>(2S)-2-hydroxy-3-oxobutyl phosphate</name>
        <dbReference type="ChEBI" id="CHEBI:58830"/>
    </ligand>
</feature>
<reference key="1">
    <citation type="submission" date="2006-12" db="EMBL/GenBank/DDBJ databases">
        <title>Complete sequence of chromosome 1 of Verminephrobacter eiseniae EF01-2.</title>
        <authorList>
            <person name="Copeland A."/>
            <person name="Lucas S."/>
            <person name="Lapidus A."/>
            <person name="Barry K."/>
            <person name="Detter J.C."/>
            <person name="Glavina del Rio T."/>
            <person name="Dalin E."/>
            <person name="Tice H."/>
            <person name="Pitluck S."/>
            <person name="Chertkov O."/>
            <person name="Brettin T."/>
            <person name="Bruce D."/>
            <person name="Han C."/>
            <person name="Tapia R."/>
            <person name="Gilna P."/>
            <person name="Schmutz J."/>
            <person name="Larimer F."/>
            <person name="Land M."/>
            <person name="Hauser L."/>
            <person name="Kyrpides N."/>
            <person name="Kim E."/>
            <person name="Stahl D."/>
            <person name="Richardson P."/>
        </authorList>
    </citation>
    <scope>NUCLEOTIDE SEQUENCE [LARGE SCALE GENOMIC DNA]</scope>
    <source>
        <strain>EF01-2</strain>
    </source>
</reference>
<protein>
    <recommendedName>
        <fullName evidence="1">6,7-dimethyl-8-ribityllumazine synthase</fullName>
        <shortName evidence="1">DMRL synthase</shortName>
        <shortName evidence="1">LS</shortName>
        <shortName evidence="1">Lumazine synthase</shortName>
        <ecNumber evidence="1">2.5.1.78</ecNumber>
    </recommendedName>
</protein>
<sequence length="154" mass="16307">MFGADKGTADRLDGKKLHIGIVQARFNSGITNALAAACCAELLALGVQDKHIMQVQVPGALEIPVALQAMAERNHYDALIALGCIIRGQTYHFELVANESGAGVTRLALDYQIPIANAIITVENLEQAIARQSEKGADAARVAVEMANLLDALS</sequence>